<keyword id="KW-1185">Reference proteome</keyword>
<keyword id="KW-0687">Ribonucleoprotein</keyword>
<keyword id="KW-0689">Ribosomal protein</keyword>
<keyword id="KW-0694">RNA-binding</keyword>
<keyword id="KW-0699">rRNA-binding</keyword>
<protein>
    <recommendedName>
        <fullName evidence="1">Large ribosomal subunit protein uL4</fullName>
    </recommendedName>
    <alternativeName>
        <fullName evidence="3">50S ribosomal protein L4</fullName>
    </alternativeName>
</protein>
<comment type="function">
    <text evidence="1">One of the primary rRNA binding proteins, this protein initially binds near the 5'-end of the 23S rRNA. It is important during the early stages of 50S assembly. It makes multiple contacts with different domains of the 23S rRNA in the assembled 50S subunit and ribosome.</text>
</comment>
<comment type="function">
    <text evidence="1">Forms part of the polypeptide exit tunnel.</text>
</comment>
<comment type="subunit">
    <text evidence="1">Part of the 50S ribosomal subunit.</text>
</comment>
<comment type="similarity">
    <text evidence="1">Belongs to the universal ribosomal protein uL4 family.</text>
</comment>
<name>RL4_SPHAL</name>
<feature type="chain" id="PRO_1000052505" description="Large ribosomal subunit protein uL4">
    <location>
        <begin position="1"/>
        <end position="208"/>
    </location>
</feature>
<feature type="region of interest" description="Disordered" evidence="2">
    <location>
        <begin position="47"/>
        <end position="84"/>
    </location>
</feature>
<feature type="compositionally biased region" description="Basic and acidic residues" evidence="2">
    <location>
        <begin position="47"/>
        <end position="58"/>
    </location>
</feature>
<gene>
    <name evidence="1" type="primary">rplD</name>
    <name type="ordered locus">Sala_2817</name>
</gene>
<reference key="1">
    <citation type="journal article" date="2009" name="Proc. Natl. Acad. Sci. U.S.A.">
        <title>The genomic basis of trophic strategy in marine bacteria.</title>
        <authorList>
            <person name="Lauro F.M."/>
            <person name="McDougald D."/>
            <person name="Thomas T."/>
            <person name="Williams T.J."/>
            <person name="Egan S."/>
            <person name="Rice S."/>
            <person name="DeMaere M.Z."/>
            <person name="Ting L."/>
            <person name="Ertan H."/>
            <person name="Johnson J."/>
            <person name="Ferriera S."/>
            <person name="Lapidus A."/>
            <person name="Anderson I."/>
            <person name="Kyrpides N."/>
            <person name="Munk A.C."/>
            <person name="Detter C."/>
            <person name="Han C.S."/>
            <person name="Brown M.V."/>
            <person name="Robb F.T."/>
            <person name="Kjelleberg S."/>
            <person name="Cavicchioli R."/>
        </authorList>
    </citation>
    <scope>NUCLEOTIDE SEQUENCE [LARGE SCALE GENOMIC DNA]</scope>
    <source>
        <strain>DSM 13593 / LMG 18877 / RB2256</strain>
    </source>
</reference>
<organism>
    <name type="scientific">Sphingopyxis alaskensis (strain DSM 13593 / LMG 18877 / RB2256)</name>
    <name type="common">Sphingomonas alaskensis</name>
    <dbReference type="NCBI Taxonomy" id="317655"/>
    <lineage>
        <taxon>Bacteria</taxon>
        <taxon>Pseudomonadati</taxon>
        <taxon>Pseudomonadota</taxon>
        <taxon>Alphaproteobacteria</taxon>
        <taxon>Sphingomonadales</taxon>
        <taxon>Sphingomonadaceae</taxon>
        <taxon>Sphingopyxis</taxon>
    </lineage>
</organism>
<evidence type="ECO:0000255" key="1">
    <source>
        <dbReference type="HAMAP-Rule" id="MF_01328"/>
    </source>
</evidence>
<evidence type="ECO:0000256" key="2">
    <source>
        <dbReference type="SAM" id="MobiDB-lite"/>
    </source>
</evidence>
<evidence type="ECO:0000305" key="3"/>
<proteinExistence type="inferred from homology"/>
<accession>Q1GPA0</accession>
<dbReference type="EMBL" id="CP000356">
    <property type="protein sequence ID" value="ABF54522.1"/>
    <property type="molecule type" value="Genomic_DNA"/>
</dbReference>
<dbReference type="RefSeq" id="WP_011543087.1">
    <property type="nucleotide sequence ID" value="NC_008048.1"/>
</dbReference>
<dbReference type="SMR" id="Q1GPA0"/>
<dbReference type="STRING" id="317655.Sala_2817"/>
<dbReference type="KEGG" id="sal:Sala_2817"/>
<dbReference type="eggNOG" id="COG0088">
    <property type="taxonomic scope" value="Bacteria"/>
</dbReference>
<dbReference type="HOGENOM" id="CLU_041575_5_1_5"/>
<dbReference type="OrthoDB" id="9803201at2"/>
<dbReference type="Proteomes" id="UP000006578">
    <property type="component" value="Chromosome"/>
</dbReference>
<dbReference type="GO" id="GO:1990904">
    <property type="term" value="C:ribonucleoprotein complex"/>
    <property type="evidence" value="ECO:0007669"/>
    <property type="project" value="UniProtKB-KW"/>
</dbReference>
<dbReference type="GO" id="GO:0005840">
    <property type="term" value="C:ribosome"/>
    <property type="evidence" value="ECO:0007669"/>
    <property type="project" value="UniProtKB-KW"/>
</dbReference>
<dbReference type="GO" id="GO:0019843">
    <property type="term" value="F:rRNA binding"/>
    <property type="evidence" value="ECO:0007669"/>
    <property type="project" value="UniProtKB-UniRule"/>
</dbReference>
<dbReference type="GO" id="GO:0003735">
    <property type="term" value="F:structural constituent of ribosome"/>
    <property type="evidence" value="ECO:0007669"/>
    <property type="project" value="InterPro"/>
</dbReference>
<dbReference type="GO" id="GO:0006412">
    <property type="term" value="P:translation"/>
    <property type="evidence" value="ECO:0007669"/>
    <property type="project" value="UniProtKB-UniRule"/>
</dbReference>
<dbReference type="Gene3D" id="3.40.1370.10">
    <property type="match status" value="1"/>
</dbReference>
<dbReference type="HAMAP" id="MF_01328_B">
    <property type="entry name" value="Ribosomal_uL4_B"/>
    <property type="match status" value="1"/>
</dbReference>
<dbReference type="InterPro" id="IPR002136">
    <property type="entry name" value="Ribosomal_uL4"/>
</dbReference>
<dbReference type="InterPro" id="IPR013005">
    <property type="entry name" value="Ribosomal_uL4-like"/>
</dbReference>
<dbReference type="InterPro" id="IPR023574">
    <property type="entry name" value="Ribosomal_uL4_dom_sf"/>
</dbReference>
<dbReference type="NCBIfam" id="TIGR03953">
    <property type="entry name" value="rplD_bact"/>
    <property type="match status" value="1"/>
</dbReference>
<dbReference type="PANTHER" id="PTHR10746">
    <property type="entry name" value="50S RIBOSOMAL PROTEIN L4"/>
    <property type="match status" value="1"/>
</dbReference>
<dbReference type="PANTHER" id="PTHR10746:SF6">
    <property type="entry name" value="LARGE RIBOSOMAL SUBUNIT PROTEIN UL4M"/>
    <property type="match status" value="1"/>
</dbReference>
<dbReference type="Pfam" id="PF00573">
    <property type="entry name" value="Ribosomal_L4"/>
    <property type="match status" value="1"/>
</dbReference>
<dbReference type="SUPFAM" id="SSF52166">
    <property type="entry name" value="Ribosomal protein L4"/>
    <property type="match status" value="1"/>
</dbReference>
<sequence length="208" mass="22209">MKIKVQTLDGKAGADIDLNDDVFGLDARADILHRVVAWQLEKRRGPARAARERSDVARTGKKFGRQKGGGTARHGDRRAPIFIGGGKAHGPRARTFGHSLNKKIRTLGLKMALSDKAKGGKLVVIDTLELKDAKTKALAGKLGKLDLGKRALFIDGDAVHESFAMASANLIGVDALPAIGANVYDIVRADTLVLTRAAVEKLEARCNG</sequence>